<keyword id="KW-0227">DNA damage</keyword>
<keyword id="KW-0233">DNA recombination</keyword>
<keyword id="KW-0234">DNA repair</keyword>
<keyword id="KW-0255">Endonuclease</keyword>
<keyword id="KW-0378">Hydrolase</keyword>
<keyword id="KW-0479">Metal-binding</keyword>
<keyword id="KW-0540">Nuclease</keyword>
<keyword id="KW-0539">Nucleus</keyword>
<keyword id="KW-1185">Reference proteome</keyword>
<keyword id="KW-0862">Zinc</keyword>
<keyword id="KW-0863">Zinc-finger</keyword>
<comment type="function">
    <text evidence="1">Catalytic subunit of the SLX1-SLX4 structure-specific endonuclease that resolves DNA secondary structures generated during DNA repair and recombination. Has endonuclease activity towards branched DNA substrates, introducing single-strand cuts in duplex DNA close to junctions with ss-DNA.</text>
</comment>
<comment type="cofactor">
    <cofactor evidence="1">
        <name>a divalent metal cation</name>
        <dbReference type="ChEBI" id="CHEBI:60240"/>
    </cofactor>
</comment>
<comment type="subunit">
    <text evidence="1">Forms a heterodimer with SLX4.</text>
</comment>
<comment type="subcellular location">
    <subcellularLocation>
        <location evidence="1">Nucleus</location>
    </subcellularLocation>
</comment>
<comment type="similarity">
    <text evidence="1">Belongs to the SLX1 family.</text>
</comment>
<organism>
    <name type="scientific">Cryptococcus neoformans var. neoformans serotype D (strain JEC21 / ATCC MYA-565)</name>
    <name type="common">Filobasidiella neoformans</name>
    <dbReference type="NCBI Taxonomy" id="214684"/>
    <lineage>
        <taxon>Eukaryota</taxon>
        <taxon>Fungi</taxon>
        <taxon>Dikarya</taxon>
        <taxon>Basidiomycota</taxon>
        <taxon>Agaricomycotina</taxon>
        <taxon>Tremellomycetes</taxon>
        <taxon>Tremellales</taxon>
        <taxon>Cryptococcaceae</taxon>
        <taxon>Cryptococcus</taxon>
        <taxon>Cryptococcus neoformans species complex</taxon>
    </lineage>
</organism>
<evidence type="ECO:0000255" key="1">
    <source>
        <dbReference type="HAMAP-Rule" id="MF_03100"/>
    </source>
</evidence>
<evidence type="ECO:0000256" key="2">
    <source>
        <dbReference type="SAM" id="MobiDB-lite"/>
    </source>
</evidence>
<sequence>MSDDAEVTNNKKTTKSTLLDGNHIFPPFYACYLLRSKATANSNRTYVGSTPDPPRRIRQHNGELKQGAWSTSRHRPWEMQMIVYGFPSKLAALQFEWAWQKPELSRHLRIRGEDQEYYHIFTKDARRNWVERKVCVAYALISLTPFNRLPLHVRFFNHETHGIWQSIHEQAGVNTIQRGKSRAKPVNPLHLLSQSVAPAVTIILDLGGVSGTSGKRRECTKGVMSHEGPIDVKDVEFRQGFGVRGKWLEIRKRILSGQDLCCHLCQERIAFNDHLTFSICPLAESQDCFCITHLICLAKHFQDEAPVEDRRAPSQPKILPYQGLCPNCKRTVQWGQHIRACYARKEQVEKAEKAEKAEKAEKAEKAEKAEKAEKAEKAEKAGRKVRQREMKTKKGDQSNGTVAQPESIYSATPVHTTFGLSNASATLIDPSMPARSMKSKDVGGEGIRHSTHTDDSDGIISVYSETEDESESEPEWEIFEAEMMALS</sequence>
<protein>
    <recommendedName>
        <fullName evidence="1">Structure-specific endonuclease subunit SLX1</fullName>
        <ecNumber evidence="1">3.1.-.-</ecNumber>
    </recommendedName>
</protein>
<reference key="1">
    <citation type="journal article" date="2005" name="Science">
        <title>The genome of the basidiomycetous yeast and human pathogen Cryptococcus neoformans.</title>
        <authorList>
            <person name="Loftus B.J."/>
            <person name="Fung E."/>
            <person name="Roncaglia P."/>
            <person name="Rowley D."/>
            <person name="Amedeo P."/>
            <person name="Bruno D."/>
            <person name="Vamathevan J."/>
            <person name="Miranda M."/>
            <person name="Anderson I.J."/>
            <person name="Fraser J.A."/>
            <person name="Allen J.E."/>
            <person name="Bosdet I.E."/>
            <person name="Brent M.R."/>
            <person name="Chiu R."/>
            <person name="Doering T.L."/>
            <person name="Donlin M.J."/>
            <person name="D'Souza C.A."/>
            <person name="Fox D.S."/>
            <person name="Grinberg V."/>
            <person name="Fu J."/>
            <person name="Fukushima M."/>
            <person name="Haas B.J."/>
            <person name="Huang J.C."/>
            <person name="Janbon G."/>
            <person name="Jones S.J.M."/>
            <person name="Koo H.L."/>
            <person name="Krzywinski M.I."/>
            <person name="Kwon-Chung K.J."/>
            <person name="Lengeler K.B."/>
            <person name="Maiti R."/>
            <person name="Marra M.A."/>
            <person name="Marra R.E."/>
            <person name="Mathewson C.A."/>
            <person name="Mitchell T.G."/>
            <person name="Pertea M."/>
            <person name="Riggs F.R."/>
            <person name="Salzberg S.L."/>
            <person name="Schein J.E."/>
            <person name="Shvartsbeyn A."/>
            <person name="Shin H."/>
            <person name="Shumway M."/>
            <person name="Specht C.A."/>
            <person name="Suh B.B."/>
            <person name="Tenney A."/>
            <person name="Utterback T.R."/>
            <person name="Wickes B.L."/>
            <person name="Wortman J.R."/>
            <person name="Wye N.H."/>
            <person name="Kronstad J.W."/>
            <person name="Lodge J.K."/>
            <person name="Heitman J."/>
            <person name="Davis R.W."/>
            <person name="Fraser C.M."/>
            <person name="Hyman R.W."/>
        </authorList>
    </citation>
    <scope>NUCLEOTIDE SEQUENCE [LARGE SCALE GENOMIC DNA]</scope>
    <source>
        <strain>JEC21 / ATCC MYA-565</strain>
    </source>
</reference>
<name>SLX1_CRYNJ</name>
<feature type="chain" id="PRO_0000383782" description="Structure-specific endonuclease subunit SLX1">
    <location>
        <begin position="1"/>
        <end position="487"/>
    </location>
</feature>
<feature type="domain" description="GIY-YIG" evidence="1">
    <location>
        <begin position="27"/>
        <end position="109"/>
    </location>
</feature>
<feature type="zinc finger region" description="SLX1-type" evidence="1">
    <location>
        <begin position="262"/>
        <end position="328"/>
    </location>
</feature>
<feature type="region of interest" description="Disordered" evidence="2">
    <location>
        <begin position="44"/>
        <end position="69"/>
    </location>
</feature>
<feature type="region of interest" description="Disordered" evidence="2">
    <location>
        <begin position="359"/>
        <end position="407"/>
    </location>
</feature>
<feature type="region of interest" description="Disordered" evidence="2">
    <location>
        <begin position="433"/>
        <end position="475"/>
    </location>
</feature>
<feature type="compositionally biased region" description="Basic and acidic residues" evidence="2">
    <location>
        <begin position="359"/>
        <end position="396"/>
    </location>
</feature>
<feature type="compositionally biased region" description="Polar residues" evidence="2">
    <location>
        <begin position="397"/>
        <end position="407"/>
    </location>
</feature>
<feature type="compositionally biased region" description="Basic and acidic residues" evidence="2">
    <location>
        <begin position="438"/>
        <end position="455"/>
    </location>
</feature>
<feature type="compositionally biased region" description="Acidic residues" evidence="2">
    <location>
        <begin position="465"/>
        <end position="475"/>
    </location>
</feature>
<proteinExistence type="inferred from homology"/>
<gene>
    <name evidence="1" type="primary">SLX1</name>
    <name type="ordered locus">CNA03830</name>
</gene>
<accession>P0CN80</accession>
<accession>Q55ZX6</accession>
<accession>Q5KP85</accession>
<dbReference type="EC" id="3.1.-.-" evidence="1"/>
<dbReference type="EMBL" id="AE017341">
    <property type="protein sequence ID" value="AAW41340.1"/>
    <property type="molecule type" value="Genomic_DNA"/>
</dbReference>
<dbReference type="RefSeq" id="XP_567159.1">
    <property type="nucleotide sequence ID" value="XM_567159.1"/>
</dbReference>
<dbReference type="SMR" id="P0CN80"/>
<dbReference type="FunCoup" id="P0CN80">
    <property type="interactions" value="82"/>
</dbReference>
<dbReference type="STRING" id="214684.P0CN80"/>
<dbReference type="PaxDb" id="214684-P0CN80"/>
<dbReference type="EnsemblFungi" id="AAW41340">
    <property type="protein sequence ID" value="AAW41340"/>
    <property type="gene ID" value="CNA03830"/>
</dbReference>
<dbReference type="GeneID" id="3253877"/>
<dbReference type="KEGG" id="cne:CNA03830"/>
<dbReference type="VEuPathDB" id="FungiDB:CNA03830"/>
<dbReference type="eggNOG" id="KOG3005">
    <property type="taxonomic scope" value="Eukaryota"/>
</dbReference>
<dbReference type="HOGENOM" id="CLU_030739_0_0_1"/>
<dbReference type="InParanoid" id="P0CN80"/>
<dbReference type="OMA" id="CITHLIC"/>
<dbReference type="OrthoDB" id="24645at2759"/>
<dbReference type="Proteomes" id="UP000002149">
    <property type="component" value="Chromosome 1"/>
</dbReference>
<dbReference type="GO" id="GO:0033557">
    <property type="term" value="C:Slx1-Slx4 complex"/>
    <property type="evidence" value="ECO:0000318"/>
    <property type="project" value="GO_Central"/>
</dbReference>
<dbReference type="GO" id="GO:0017108">
    <property type="term" value="F:5'-flap endonuclease activity"/>
    <property type="evidence" value="ECO:0000318"/>
    <property type="project" value="GO_Central"/>
</dbReference>
<dbReference type="GO" id="GO:0008821">
    <property type="term" value="F:crossover junction DNA endonuclease activity"/>
    <property type="evidence" value="ECO:0000318"/>
    <property type="project" value="GO_Central"/>
</dbReference>
<dbReference type="GO" id="GO:0008270">
    <property type="term" value="F:zinc ion binding"/>
    <property type="evidence" value="ECO:0007669"/>
    <property type="project" value="UniProtKB-KW"/>
</dbReference>
<dbReference type="GO" id="GO:0000724">
    <property type="term" value="P:double-strand break repair via homologous recombination"/>
    <property type="evidence" value="ECO:0000318"/>
    <property type="project" value="GO_Central"/>
</dbReference>
<dbReference type="CDD" id="cd10455">
    <property type="entry name" value="GIY-YIG_SLX1"/>
    <property type="match status" value="1"/>
</dbReference>
<dbReference type="FunFam" id="3.40.1440.10:FF:000006">
    <property type="entry name" value="Structure-specific endonuclease subunit SLX1"/>
    <property type="match status" value="1"/>
</dbReference>
<dbReference type="Gene3D" id="3.40.1440.10">
    <property type="entry name" value="GIY-YIG endonuclease"/>
    <property type="match status" value="1"/>
</dbReference>
<dbReference type="Gene3D" id="3.30.40.10">
    <property type="entry name" value="Zinc/RING finger domain, C3HC4 (zinc finger)"/>
    <property type="match status" value="1"/>
</dbReference>
<dbReference type="HAMAP" id="MF_03100">
    <property type="entry name" value="Endonuc_su_Slx1"/>
    <property type="match status" value="1"/>
</dbReference>
<dbReference type="InterPro" id="IPR000305">
    <property type="entry name" value="GIY-YIG_endonuc"/>
</dbReference>
<dbReference type="InterPro" id="IPR035901">
    <property type="entry name" value="GIY-YIG_endonuc_sf"/>
</dbReference>
<dbReference type="InterPro" id="IPR027520">
    <property type="entry name" value="Slx1"/>
</dbReference>
<dbReference type="InterPro" id="IPR048749">
    <property type="entry name" value="SLX1_C"/>
</dbReference>
<dbReference type="InterPro" id="IPR050381">
    <property type="entry name" value="SLX1_endonuclease"/>
</dbReference>
<dbReference type="InterPro" id="IPR013083">
    <property type="entry name" value="Znf_RING/FYVE/PHD"/>
</dbReference>
<dbReference type="PANTHER" id="PTHR20208">
    <property type="entry name" value="STRUCTURE-SPECIFIC ENDONUCLEASE SUBUNIT SLX1"/>
    <property type="match status" value="1"/>
</dbReference>
<dbReference type="PANTHER" id="PTHR20208:SF10">
    <property type="entry name" value="STRUCTURE-SPECIFIC ENDONUCLEASE SUBUNIT SLX1"/>
    <property type="match status" value="1"/>
</dbReference>
<dbReference type="Pfam" id="PF01541">
    <property type="entry name" value="GIY-YIG"/>
    <property type="match status" value="1"/>
</dbReference>
<dbReference type="Pfam" id="PF21202">
    <property type="entry name" value="SLX1_C"/>
    <property type="match status" value="1"/>
</dbReference>
<dbReference type="SUPFAM" id="SSF82771">
    <property type="entry name" value="GIY-YIG endonuclease"/>
    <property type="match status" value="1"/>
</dbReference>
<dbReference type="PROSITE" id="PS50164">
    <property type="entry name" value="GIY_YIG"/>
    <property type="match status" value="1"/>
</dbReference>